<accession>A5WDI5</accession>
<keyword id="KW-0131">Cell cycle</keyword>
<keyword id="KW-0132">Cell division</keyword>
<keyword id="KW-0133">Cell shape</keyword>
<keyword id="KW-0961">Cell wall biogenesis/degradation</keyword>
<keyword id="KW-0963">Cytoplasm</keyword>
<keyword id="KW-0274">FAD</keyword>
<keyword id="KW-0285">Flavoprotein</keyword>
<keyword id="KW-0521">NADP</keyword>
<keyword id="KW-0560">Oxidoreductase</keyword>
<keyword id="KW-0573">Peptidoglycan synthesis</keyword>
<sequence length="383" mass="41804">MCPSFHTTASVTTASNQADSDFNLAKLITAPAQLLAHNTMRLSCQAMQLITLEQEAQVEPAIAKLKEGDAPLFVLSGGSNVILPKQLQAQVLHPVFKGIEVLAEDEHSVSLEVMGGENWHELVLYTVNNGWYGLENLALIPGLVGASPVQNIGAYGVQLEDCLTHIKAFHLPTQKWHDFDKADCQFNYRDSLFKQQAGQWLITRVGFKLHKDATQVNADYGDVACLALSLAQADNRSAIGPIDVMHAIIDIRQSKLPDPAVLPNCGSFFKNPIIGTEQFAQLQHEYPGIVGYRVDEAHTKVAAGWLIDTAGLKGQGINPILTHAKQALVLVNHSALDSTTPASQADILATQQFIQRSIKDKFGIELEREPVWVDEQASYTAAP</sequence>
<feature type="chain" id="PRO_0000332491" description="UDP-N-acetylenolpyruvoylglucosamine reductase">
    <location>
        <begin position="1"/>
        <end position="383"/>
    </location>
</feature>
<feature type="domain" description="FAD-binding PCMH-type" evidence="1">
    <location>
        <begin position="42"/>
        <end position="212"/>
    </location>
</feature>
<feature type="active site" evidence="1">
    <location>
        <position position="189"/>
    </location>
</feature>
<feature type="active site" description="Proton donor" evidence="1">
    <location>
        <position position="267"/>
    </location>
</feature>
<feature type="active site" evidence="1">
    <location>
        <position position="369"/>
    </location>
</feature>
<gene>
    <name evidence="1" type="primary">murB</name>
    <name type="ordered locus">PsycPRwf_0774</name>
</gene>
<organism>
    <name type="scientific">Psychrobacter sp. (strain PRwf-1)</name>
    <dbReference type="NCBI Taxonomy" id="349106"/>
    <lineage>
        <taxon>Bacteria</taxon>
        <taxon>Pseudomonadati</taxon>
        <taxon>Pseudomonadota</taxon>
        <taxon>Gammaproteobacteria</taxon>
        <taxon>Moraxellales</taxon>
        <taxon>Moraxellaceae</taxon>
        <taxon>Psychrobacter</taxon>
    </lineage>
</organism>
<dbReference type="EC" id="1.3.1.98" evidence="1"/>
<dbReference type="EMBL" id="CP000713">
    <property type="protein sequence ID" value="ABQ93726.1"/>
    <property type="molecule type" value="Genomic_DNA"/>
</dbReference>
<dbReference type="SMR" id="A5WDI5"/>
<dbReference type="STRING" id="349106.PsycPRwf_0774"/>
<dbReference type="KEGG" id="prw:PsycPRwf_0774"/>
<dbReference type="eggNOG" id="COG0812">
    <property type="taxonomic scope" value="Bacteria"/>
</dbReference>
<dbReference type="HOGENOM" id="CLU_035304_0_0_6"/>
<dbReference type="UniPathway" id="UPA00219"/>
<dbReference type="GO" id="GO:0005829">
    <property type="term" value="C:cytosol"/>
    <property type="evidence" value="ECO:0007669"/>
    <property type="project" value="TreeGrafter"/>
</dbReference>
<dbReference type="GO" id="GO:0071949">
    <property type="term" value="F:FAD binding"/>
    <property type="evidence" value="ECO:0007669"/>
    <property type="project" value="InterPro"/>
</dbReference>
<dbReference type="GO" id="GO:0008762">
    <property type="term" value="F:UDP-N-acetylmuramate dehydrogenase activity"/>
    <property type="evidence" value="ECO:0007669"/>
    <property type="project" value="UniProtKB-UniRule"/>
</dbReference>
<dbReference type="GO" id="GO:0051301">
    <property type="term" value="P:cell division"/>
    <property type="evidence" value="ECO:0007669"/>
    <property type="project" value="UniProtKB-KW"/>
</dbReference>
<dbReference type="GO" id="GO:0071555">
    <property type="term" value="P:cell wall organization"/>
    <property type="evidence" value="ECO:0007669"/>
    <property type="project" value="UniProtKB-KW"/>
</dbReference>
<dbReference type="GO" id="GO:0009252">
    <property type="term" value="P:peptidoglycan biosynthetic process"/>
    <property type="evidence" value="ECO:0007669"/>
    <property type="project" value="UniProtKB-UniRule"/>
</dbReference>
<dbReference type="GO" id="GO:0008360">
    <property type="term" value="P:regulation of cell shape"/>
    <property type="evidence" value="ECO:0007669"/>
    <property type="project" value="UniProtKB-KW"/>
</dbReference>
<dbReference type="Gene3D" id="3.30.465.10">
    <property type="match status" value="1"/>
</dbReference>
<dbReference type="Gene3D" id="3.90.78.10">
    <property type="entry name" value="UDP-N-acetylenolpyruvoylglucosamine reductase, C-terminal domain"/>
    <property type="match status" value="1"/>
</dbReference>
<dbReference type="Gene3D" id="3.30.43.10">
    <property type="entry name" value="Uridine Diphospho-n-acetylenolpyruvylglucosamine Reductase, domain 2"/>
    <property type="match status" value="1"/>
</dbReference>
<dbReference type="HAMAP" id="MF_00037">
    <property type="entry name" value="MurB"/>
    <property type="match status" value="1"/>
</dbReference>
<dbReference type="InterPro" id="IPR016166">
    <property type="entry name" value="FAD-bd_PCMH"/>
</dbReference>
<dbReference type="InterPro" id="IPR036318">
    <property type="entry name" value="FAD-bd_PCMH-like_sf"/>
</dbReference>
<dbReference type="InterPro" id="IPR016167">
    <property type="entry name" value="FAD-bd_PCMH_sub1"/>
</dbReference>
<dbReference type="InterPro" id="IPR016169">
    <property type="entry name" value="FAD-bd_PCMH_sub2"/>
</dbReference>
<dbReference type="InterPro" id="IPR003170">
    <property type="entry name" value="MurB"/>
</dbReference>
<dbReference type="InterPro" id="IPR011601">
    <property type="entry name" value="MurB_C"/>
</dbReference>
<dbReference type="InterPro" id="IPR036635">
    <property type="entry name" value="MurB_C_sf"/>
</dbReference>
<dbReference type="InterPro" id="IPR006094">
    <property type="entry name" value="Oxid_FAD_bind_N"/>
</dbReference>
<dbReference type="NCBIfam" id="TIGR00179">
    <property type="entry name" value="murB"/>
    <property type="match status" value="1"/>
</dbReference>
<dbReference type="NCBIfam" id="NF000755">
    <property type="entry name" value="PRK00046.1"/>
    <property type="match status" value="1"/>
</dbReference>
<dbReference type="PANTHER" id="PTHR21071">
    <property type="entry name" value="UDP-N-ACETYLENOLPYRUVOYLGLUCOSAMINE REDUCTASE"/>
    <property type="match status" value="1"/>
</dbReference>
<dbReference type="PANTHER" id="PTHR21071:SF4">
    <property type="entry name" value="UDP-N-ACETYLENOLPYRUVOYLGLUCOSAMINE REDUCTASE"/>
    <property type="match status" value="1"/>
</dbReference>
<dbReference type="Pfam" id="PF01565">
    <property type="entry name" value="FAD_binding_4"/>
    <property type="match status" value="1"/>
</dbReference>
<dbReference type="Pfam" id="PF02873">
    <property type="entry name" value="MurB_C"/>
    <property type="match status" value="1"/>
</dbReference>
<dbReference type="SUPFAM" id="SSF56176">
    <property type="entry name" value="FAD-binding/transporter-associated domain-like"/>
    <property type="match status" value="1"/>
</dbReference>
<dbReference type="SUPFAM" id="SSF56194">
    <property type="entry name" value="Uridine diphospho-N-Acetylenolpyruvylglucosamine reductase, MurB, C-terminal domain"/>
    <property type="match status" value="1"/>
</dbReference>
<dbReference type="PROSITE" id="PS51387">
    <property type="entry name" value="FAD_PCMH"/>
    <property type="match status" value="1"/>
</dbReference>
<name>MURB_PSYWF</name>
<comment type="function">
    <text evidence="1">Cell wall formation.</text>
</comment>
<comment type="catalytic activity">
    <reaction evidence="1">
        <text>UDP-N-acetyl-alpha-D-muramate + NADP(+) = UDP-N-acetyl-3-O-(1-carboxyvinyl)-alpha-D-glucosamine + NADPH + H(+)</text>
        <dbReference type="Rhea" id="RHEA:12248"/>
        <dbReference type="ChEBI" id="CHEBI:15378"/>
        <dbReference type="ChEBI" id="CHEBI:57783"/>
        <dbReference type="ChEBI" id="CHEBI:58349"/>
        <dbReference type="ChEBI" id="CHEBI:68483"/>
        <dbReference type="ChEBI" id="CHEBI:70757"/>
        <dbReference type="EC" id="1.3.1.98"/>
    </reaction>
</comment>
<comment type="cofactor">
    <cofactor evidence="1">
        <name>FAD</name>
        <dbReference type="ChEBI" id="CHEBI:57692"/>
    </cofactor>
</comment>
<comment type="pathway">
    <text evidence="1">Cell wall biogenesis; peptidoglycan biosynthesis.</text>
</comment>
<comment type="subcellular location">
    <subcellularLocation>
        <location evidence="1">Cytoplasm</location>
    </subcellularLocation>
</comment>
<comment type="similarity">
    <text evidence="1">Belongs to the MurB family.</text>
</comment>
<protein>
    <recommendedName>
        <fullName evidence="1">UDP-N-acetylenolpyruvoylglucosamine reductase</fullName>
        <ecNumber evidence="1">1.3.1.98</ecNumber>
    </recommendedName>
    <alternativeName>
        <fullName evidence="1">UDP-N-acetylmuramate dehydrogenase</fullName>
    </alternativeName>
</protein>
<reference key="1">
    <citation type="submission" date="2007-05" db="EMBL/GenBank/DDBJ databases">
        <title>Complete sequence of chromosome of Psychrobacter sp. PRwf-1.</title>
        <authorList>
            <consortium name="US DOE Joint Genome Institute"/>
            <person name="Copeland A."/>
            <person name="Lucas S."/>
            <person name="Lapidus A."/>
            <person name="Barry K."/>
            <person name="Detter J.C."/>
            <person name="Glavina del Rio T."/>
            <person name="Hammon N."/>
            <person name="Israni S."/>
            <person name="Dalin E."/>
            <person name="Tice H."/>
            <person name="Pitluck S."/>
            <person name="Chain P."/>
            <person name="Malfatti S."/>
            <person name="Shin M."/>
            <person name="Vergez L."/>
            <person name="Schmutz J."/>
            <person name="Larimer F."/>
            <person name="Land M."/>
            <person name="Hauser L."/>
            <person name="Kyrpides N."/>
            <person name="Kim E."/>
            <person name="Tiedje J."/>
            <person name="Richardson P."/>
        </authorList>
    </citation>
    <scope>NUCLEOTIDE SEQUENCE [LARGE SCALE GENOMIC DNA]</scope>
    <source>
        <strain>PRwf-1</strain>
    </source>
</reference>
<proteinExistence type="inferred from homology"/>
<evidence type="ECO:0000255" key="1">
    <source>
        <dbReference type="HAMAP-Rule" id="MF_00037"/>
    </source>
</evidence>